<keyword id="KW-0002">3D-structure</keyword>
<keyword id="KW-0052">Apoplast</keyword>
<keyword id="KW-0430">Lectin</keyword>
<keyword id="KW-0465">Mannose-binding</keyword>
<keyword id="KW-0964">Secreted</keyword>
<proteinExistence type="evidence at protein level"/>
<sequence length="146" mass="15122">MSKPVKIGPWGGNGGSERDVQPKPIRMVSMTVSSGAIVDAIAFTYVGTDNVQHSSGIKWGGTGGTEDTINLDATNYVTEISGTVGKFGTDDIVTSLKIITSKGVTRTYGSGTGIPFRVPVLDGGKIAGFFGRAGAFLDAIGFYITP</sequence>
<organism>
    <name type="scientific">Hordeum vulgare</name>
    <name type="common">Barley</name>
    <dbReference type="NCBI Taxonomy" id="4513"/>
    <lineage>
        <taxon>Eukaryota</taxon>
        <taxon>Viridiplantae</taxon>
        <taxon>Streptophyta</taxon>
        <taxon>Embryophyta</taxon>
        <taxon>Tracheophyta</taxon>
        <taxon>Spermatophyta</taxon>
        <taxon>Magnoliopsida</taxon>
        <taxon>Liliopsida</taxon>
        <taxon>Poales</taxon>
        <taxon>Poaceae</taxon>
        <taxon>BOP clade</taxon>
        <taxon>Pooideae</taxon>
        <taxon>Triticodae</taxon>
        <taxon>Triticeae</taxon>
        <taxon>Hordeinae</taxon>
        <taxon>Hordeum</taxon>
    </lineage>
</organism>
<evidence type="ECO:0000250" key="1">
    <source>
        <dbReference type="UniProtKB" id="P82953"/>
    </source>
</evidence>
<evidence type="ECO:0000255" key="2">
    <source>
        <dbReference type="PROSITE-ProRule" id="PRU01088"/>
    </source>
</evidence>
<evidence type="ECO:0000256" key="3">
    <source>
        <dbReference type="SAM" id="MobiDB-lite"/>
    </source>
</evidence>
<evidence type="ECO:0000312" key="4">
    <source>
        <dbReference type="EMBL" id="AAV39531.1"/>
    </source>
</evidence>
<evidence type="ECO:0007829" key="5">
    <source>
        <dbReference type="PDB" id="7V4Z"/>
    </source>
</evidence>
<accession>Q5U9T2</accession>
<comment type="function">
    <text evidence="1">Mannose-specific lectin. Has a weak agglutinating activity against rabbit erythrocytes (By similarity).</text>
</comment>
<comment type="subcellular location">
    <subcellularLocation>
        <location evidence="1">Secreted</location>
        <location evidence="1">Extracellular space</location>
        <location evidence="1">Apoplast</location>
    </subcellularLocation>
</comment>
<comment type="similarity">
    <text evidence="2">Belongs to the jacalin lectin family.</text>
</comment>
<protein>
    <recommendedName>
        <fullName evidence="4">Horcolin</fullName>
    </recommendedName>
    <alternativeName>
        <fullName evidence="1">Agglutinin</fullName>
    </alternativeName>
    <alternativeName>
        <fullName evidence="1">Mannose-specific lectin</fullName>
    </alternativeName>
</protein>
<feature type="chain" id="PRO_0000382241" description="Horcolin">
    <location>
        <begin position="1"/>
        <end position="146"/>
    </location>
</feature>
<feature type="domain" description="Jacalin-type lectin" evidence="2">
    <location>
        <begin position="4"/>
        <end position="146"/>
    </location>
</feature>
<feature type="region of interest" description="Disordered" evidence="3">
    <location>
        <begin position="1"/>
        <end position="21"/>
    </location>
</feature>
<feature type="strand" evidence="5">
    <location>
        <begin position="5"/>
        <end position="11"/>
    </location>
</feature>
<feature type="strand" evidence="5">
    <location>
        <begin position="15"/>
        <end position="18"/>
    </location>
</feature>
<feature type="strand" evidence="5">
    <location>
        <begin position="24"/>
        <end position="47"/>
    </location>
</feature>
<feature type="strand" evidence="5">
    <location>
        <begin position="52"/>
        <end position="54"/>
    </location>
</feature>
<feature type="strand" evidence="5">
    <location>
        <begin position="64"/>
        <end position="70"/>
    </location>
</feature>
<feature type="strand" evidence="5">
    <location>
        <begin position="73"/>
        <end position="75"/>
    </location>
</feature>
<feature type="strand" evidence="5">
    <location>
        <begin position="77"/>
        <end position="87"/>
    </location>
</feature>
<feature type="strand" evidence="5">
    <location>
        <begin position="90"/>
        <end position="100"/>
    </location>
</feature>
<feature type="strand" evidence="5">
    <location>
        <begin position="105"/>
        <end position="109"/>
    </location>
</feature>
<feature type="strand" evidence="5">
    <location>
        <begin position="113"/>
        <end position="120"/>
    </location>
</feature>
<feature type="strand" evidence="5">
    <location>
        <begin position="125"/>
        <end position="145"/>
    </location>
</feature>
<name>LECH_HORVU</name>
<reference evidence="4" key="1">
    <citation type="submission" date="2004-10" db="EMBL/GenBank/DDBJ databases">
        <authorList>
            <person name="Rupprecht I."/>
            <person name="Kloppstech K."/>
        </authorList>
    </citation>
    <scope>NUCLEOTIDE SEQUENCE [GENOMIC DNA]</scope>
</reference>
<dbReference type="EMBL" id="AY770690">
    <property type="protein sequence ID" value="AAV39531.1"/>
    <property type="molecule type" value="Genomic_DNA"/>
</dbReference>
<dbReference type="PDB" id="7V4S">
    <property type="method" value="X-ray"/>
    <property type="resolution" value="1.20 A"/>
    <property type="chains" value="A=1-146"/>
</dbReference>
<dbReference type="PDB" id="7V4Z">
    <property type="method" value="X-ray"/>
    <property type="resolution" value="1.16 A"/>
    <property type="chains" value="A/B/C/D/E/F/G/H/I/J/K/L=1-146"/>
</dbReference>
<dbReference type="PDBsum" id="7V4S"/>
<dbReference type="PDBsum" id="7V4Z"/>
<dbReference type="BMRB" id="Q5U9T2"/>
<dbReference type="SMR" id="Q5U9T2"/>
<dbReference type="UniLectin" id="Q5U9T2"/>
<dbReference type="ExpressionAtlas" id="Q5U9T2">
    <property type="expression patterns" value="baseline and differential"/>
</dbReference>
<dbReference type="GO" id="GO:0048046">
    <property type="term" value="C:apoplast"/>
    <property type="evidence" value="ECO:0007669"/>
    <property type="project" value="UniProtKB-SubCell"/>
</dbReference>
<dbReference type="GO" id="GO:0005537">
    <property type="term" value="F:D-mannose binding"/>
    <property type="evidence" value="ECO:0007669"/>
    <property type="project" value="UniProtKB-KW"/>
</dbReference>
<dbReference type="CDD" id="cd09612">
    <property type="entry name" value="Jacalin"/>
    <property type="match status" value="1"/>
</dbReference>
<dbReference type="Gene3D" id="2.100.10.30">
    <property type="entry name" value="Jacalin-like lectin domain"/>
    <property type="match status" value="1"/>
</dbReference>
<dbReference type="InterPro" id="IPR001229">
    <property type="entry name" value="Jacalin-like_lectin_dom"/>
</dbReference>
<dbReference type="InterPro" id="IPR033734">
    <property type="entry name" value="Jacalin-like_lectin_dom_plant"/>
</dbReference>
<dbReference type="InterPro" id="IPR036404">
    <property type="entry name" value="Jacalin-like_lectin_dom_sf"/>
</dbReference>
<dbReference type="PANTHER" id="PTHR46506">
    <property type="entry name" value="OS05G0143600 PROTEIN"/>
    <property type="match status" value="1"/>
</dbReference>
<dbReference type="Pfam" id="PF01419">
    <property type="entry name" value="Jacalin"/>
    <property type="match status" value="1"/>
</dbReference>
<dbReference type="SMART" id="SM00915">
    <property type="entry name" value="Jacalin"/>
    <property type="match status" value="1"/>
</dbReference>
<dbReference type="SUPFAM" id="SSF51101">
    <property type="entry name" value="Mannose-binding lectins"/>
    <property type="match status" value="1"/>
</dbReference>
<dbReference type="PROSITE" id="PS51752">
    <property type="entry name" value="JACALIN_LECTIN"/>
    <property type="match status" value="1"/>
</dbReference>